<feature type="chain" id="PRO_0000206715" description="Chromosomal protein D1">
    <location>
        <begin position="1"/>
        <end position="355"/>
    </location>
</feature>
<feature type="DNA-binding region" description="A.T hook 1">
    <location>
        <begin position="7"/>
        <end position="14"/>
    </location>
</feature>
<feature type="DNA-binding region" description="A.T hook 2">
    <location>
        <begin position="34"/>
        <end position="41"/>
    </location>
</feature>
<feature type="DNA-binding region" description="A.T hook 3">
    <location>
        <begin position="60"/>
        <end position="67"/>
    </location>
</feature>
<feature type="DNA-binding region" description="A.T hook 4">
    <location>
        <begin position="94"/>
        <end position="101"/>
    </location>
</feature>
<feature type="DNA-binding region" description="A.T hook 5">
    <location>
        <begin position="122"/>
        <end position="129"/>
    </location>
</feature>
<feature type="DNA-binding region" description="A.T hook 6">
    <location>
        <begin position="155"/>
        <end position="162"/>
    </location>
</feature>
<feature type="DNA-binding region" description="A.T hook 7">
    <location>
        <begin position="174"/>
        <end position="181"/>
    </location>
</feature>
<feature type="DNA-binding region" description="A.T hook 8">
    <location>
        <begin position="196"/>
        <end position="203"/>
    </location>
</feature>
<feature type="DNA-binding region" description="A.T hook 9">
    <location>
        <begin position="219"/>
        <end position="226"/>
    </location>
</feature>
<feature type="DNA-binding region" description="A.T hook 10">
    <location>
        <begin position="262"/>
        <end position="269"/>
    </location>
</feature>
<feature type="DNA-binding region" description="A.T hook 11">
    <location>
        <begin position="281"/>
        <end position="288"/>
    </location>
</feature>
<feature type="region of interest" description="Disordered" evidence="2">
    <location>
        <begin position="1"/>
        <end position="355"/>
    </location>
</feature>
<feature type="compositionally biased region" description="Acidic residues" evidence="2">
    <location>
        <begin position="64"/>
        <end position="77"/>
    </location>
</feature>
<feature type="compositionally biased region" description="Basic residues" evidence="2">
    <location>
        <begin position="119"/>
        <end position="130"/>
    </location>
</feature>
<feature type="compositionally biased region" description="Acidic residues" evidence="2">
    <location>
        <begin position="135"/>
        <end position="147"/>
    </location>
</feature>
<feature type="compositionally biased region" description="Acidic residues" evidence="2">
    <location>
        <begin position="237"/>
        <end position="247"/>
    </location>
</feature>
<feature type="compositionally biased region" description="Basic and acidic residues" evidence="2">
    <location>
        <begin position="307"/>
        <end position="318"/>
    </location>
</feature>
<feature type="compositionally biased region" description="Polar residues" evidence="2">
    <location>
        <begin position="345"/>
        <end position="355"/>
    </location>
</feature>
<feature type="modified residue" description="N-acetylmethionine" evidence="6">
    <location>
        <position position="1"/>
    </location>
</feature>
<feature type="modified residue" description="Phosphoserine" evidence="3">
    <location>
        <position position="30"/>
    </location>
</feature>
<feature type="modified residue" description="Phosphoserine" evidence="4">
    <location>
        <position position="80"/>
    </location>
</feature>
<feature type="modified residue" description="Phosphoserine" evidence="4">
    <location>
        <position position="88"/>
    </location>
</feature>
<feature type="modified residue" description="Phosphoserine" evidence="4">
    <location>
        <position position="89"/>
    </location>
</feature>
<feature type="modified residue" description="Phosphoserine" evidence="4">
    <location>
        <position position="107"/>
    </location>
</feature>
<feature type="modified residue" description="Phosphoserine" evidence="4">
    <location>
        <position position="109"/>
    </location>
</feature>
<feature type="modified residue" description="Phosphoserine" evidence="4">
    <location>
        <position position="112"/>
    </location>
</feature>
<feature type="modified residue" description="Phosphothreonine" evidence="4">
    <location>
        <position position="115"/>
    </location>
</feature>
<feature type="modified residue" description="Phosphoserine" evidence="4">
    <location>
        <position position="118"/>
    </location>
</feature>
<feature type="modified residue" description="Phosphoserine; by CK2" evidence="1">
    <location>
        <position position="133"/>
    </location>
</feature>
<feature type="modified residue" description="Phosphoserine; by CK2" evidence="1">
    <location>
        <position position="135"/>
    </location>
</feature>
<feature type="modified residue" description="Phosphoserine" evidence="4">
    <location>
        <position position="149"/>
    </location>
</feature>
<feature type="modified residue" description="Phosphoserine" evidence="4">
    <location>
        <position position="150"/>
    </location>
</feature>
<feature type="modified residue" description="Phosphoserine" evidence="4">
    <location>
        <position position="161"/>
    </location>
</feature>
<feature type="modified residue" description="Phosphoserine" evidence="4">
    <location>
        <position position="164"/>
    </location>
</feature>
<feature type="modified residue" description="Phosphoserine" evidence="4">
    <location>
        <position position="170"/>
    </location>
</feature>
<feature type="modified residue" description="Phosphoserine; by CK2" evidence="1">
    <location>
        <position position="186"/>
    </location>
</feature>
<feature type="modified residue" description="Phosphoserine" evidence="4">
    <location>
        <position position="208"/>
    </location>
</feature>
<feature type="modified residue" description="Phosphoserine" evidence="3 4">
    <location>
        <position position="246"/>
    </location>
</feature>
<feature type="modified residue" description="Phosphoserine" evidence="4">
    <location>
        <position position="252"/>
    </location>
</feature>
<feature type="modified residue" description="Phosphoserine" evidence="4">
    <location>
        <position position="253"/>
    </location>
</feature>
<feature type="modified residue" description="Phosphoserine" evidence="4">
    <location>
        <position position="299"/>
    </location>
</feature>
<feature type="modified residue" description="Phosphoserine" evidence="4">
    <location>
        <position position="307"/>
    </location>
</feature>
<feature type="modified residue" description="Phosphoserine; by CK2" evidence="1">
    <location>
        <position position="311"/>
    </location>
</feature>
<feature type="modified residue" description="Phosphothreonine" evidence="4">
    <location>
        <position position="321"/>
    </location>
</feature>
<feature type="modified residue" description="Phosphoserine; by CK2" evidence="1">
    <location>
        <position position="332"/>
    </location>
</feature>
<feature type="sequence conflict" description="In Ref. 2; AAB01211." evidence="5" ref="2">
    <original>D</original>
    <variation>E</variation>
    <location>
        <position position="291"/>
    </location>
</feature>
<comment type="function">
    <text>This satellite DNA-associated protein is a double-stranded DNA binding protein specific for tracts of pure at DNA. It may play a role in organizing the higher-order structure of euchromatin as well as heterochromatin.</text>
</comment>
<comment type="subcellular location">
    <subcellularLocation>
        <location>Nucleus</location>
    </subcellularLocation>
    <subcellularLocation>
        <location>Chromosome</location>
    </subcellularLocation>
</comment>
<comment type="miscellaneous">
    <text>D1 may be the most abundant member of a small family of D1-like proteins.</text>
</comment>
<evidence type="ECO:0000255" key="1"/>
<evidence type="ECO:0000256" key="2">
    <source>
        <dbReference type="SAM" id="MobiDB-lite"/>
    </source>
</evidence>
<evidence type="ECO:0000269" key="3">
    <source>
    </source>
</evidence>
<evidence type="ECO:0000269" key="4">
    <source>
    </source>
</evidence>
<evidence type="ECO:0000305" key="5"/>
<evidence type="ECO:0000305" key="6">
    <source>
    </source>
</evidence>
<dbReference type="EMBL" id="J04725">
    <property type="protein sequence ID" value="AAA28440.1"/>
    <property type="molecule type" value="mRNA"/>
</dbReference>
<dbReference type="EMBL" id="U56393">
    <property type="protein sequence ID" value="AAB01211.1"/>
    <property type="molecule type" value="Genomic_DNA"/>
</dbReference>
<dbReference type="EMBL" id="AE014297">
    <property type="protein sequence ID" value="AAF54341.1"/>
    <property type="molecule type" value="Genomic_DNA"/>
</dbReference>
<dbReference type="EMBL" id="AY094819">
    <property type="protein sequence ID" value="AAM11172.1"/>
    <property type="molecule type" value="mRNA"/>
</dbReference>
<dbReference type="EMBL" id="BT001362">
    <property type="protein sequence ID" value="AAN71117.1"/>
    <property type="molecule type" value="mRNA"/>
</dbReference>
<dbReference type="EMBL" id="BT001636">
    <property type="protein sequence ID" value="AAN71391.1"/>
    <property type="molecule type" value="mRNA"/>
</dbReference>
<dbReference type="PIR" id="A33821">
    <property type="entry name" value="A33821"/>
</dbReference>
<dbReference type="RefSeq" id="NP_524286.1">
    <property type="nucleotide sequence ID" value="NM_079562.3"/>
</dbReference>
<dbReference type="RefSeq" id="NP_731319.1">
    <property type="nucleotide sequence ID" value="NM_169261.3"/>
</dbReference>
<dbReference type="RefSeq" id="NP_731320.1">
    <property type="nucleotide sequence ID" value="NM_169262.2"/>
</dbReference>
<dbReference type="BioGRID" id="66262">
    <property type="interactions" value="28"/>
</dbReference>
<dbReference type="DIP" id="DIP-17744N"/>
<dbReference type="FunCoup" id="P22058">
    <property type="interactions" value="194"/>
</dbReference>
<dbReference type="IntAct" id="P22058">
    <property type="interactions" value="48"/>
</dbReference>
<dbReference type="STRING" id="7227.FBpp0081467"/>
<dbReference type="iPTMnet" id="P22058"/>
<dbReference type="PaxDb" id="7227-FBpp0081467"/>
<dbReference type="DNASU" id="41095"/>
<dbReference type="EnsemblMetazoa" id="FBtr0081987">
    <property type="protein sequence ID" value="FBpp0081467"/>
    <property type="gene ID" value="FBgn0000412"/>
</dbReference>
<dbReference type="EnsemblMetazoa" id="FBtr0081988">
    <property type="protein sequence ID" value="FBpp0081468"/>
    <property type="gene ID" value="FBgn0000412"/>
</dbReference>
<dbReference type="EnsemblMetazoa" id="FBtr0301524">
    <property type="protein sequence ID" value="FBpp0290739"/>
    <property type="gene ID" value="FBgn0000412"/>
</dbReference>
<dbReference type="GeneID" id="41095"/>
<dbReference type="KEGG" id="dme:Dmel_CG9745"/>
<dbReference type="AGR" id="FB:FBgn0000412"/>
<dbReference type="CTD" id="41095"/>
<dbReference type="FlyBase" id="FBgn0000412">
    <property type="gene designation" value="D1"/>
</dbReference>
<dbReference type="VEuPathDB" id="VectorBase:FBgn0000412"/>
<dbReference type="eggNOG" id="ENOG502TC9F">
    <property type="taxonomic scope" value="Eukaryota"/>
</dbReference>
<dbReference type="HOGENOM" id="CLU_055706_0_0_1"/>
<dbReference type="InParanoid" id="P22058"/>
<dbReference type="OMA" id="ECISDEP"/>
<dbReference type="OrthoDB" id="4961370at2759"/>
<dbReference type="PhylomeDB" id="P22058"/>
<dbReference type="SignaLink" id="P22058"/>
<dbReference type="BioGRID-ORCS" id="41095">
    <property type="hits" value="0 hits in 1 CRISPR screen"/>
</dbReference>
<dbReference type="ChiTaRS" id="D1">
    <property type="organism name" value="fly"/>
</dbReference>
<dbReference type="GenomeRNAi" id="41095"/>
<dbReference type="PRO" id="PR:P22058"/>
<dbReference type="Proteomes" id="UP000000803">
    <property type="component" value="Chromosome 3R"/>
</dbReference>
<dbReference type="Bgee" id="FBgn0000412">
    <property type="expression patterns" value="Expressed in T neuron T4c (Drosophila) in embryonic/larval optic lobe (Drosophila) and 219 other cell types or tissues"/>
</dbReference>
<dbReference type="ExpressionAtlas" id="P22058">
    <property type="expression patterns" value="baseline and differential"/>
</dbReference>
<dbReference type="GO" id="GO:0005737">
    <property type="term" value="C:cytoplasm"/>
    <property type="evidence" value="ECO:0000314"/>
    <property type="project" value="FlyBase"/>
</dbReference>
<dbReference type="GO" id="GO:0000792">
    <property type="term" value="C:heterochromatin"/>
    <property type="evidence" value="ECO:0000314"/>
    <property type="project" value="FlyBase"/>
</dbReference>
<dbReference type="GO" id="GO:0000786">
    <property type="term" value="C:nucleosome"/>
    <property type="evidence" value="ECO:0000314"/>
    <property type="project" value="FlyBase"/>
</dbReference>
<dbReference type="GO" id="GO:0005634">
    <property type="term" value="C:nucleus"/>
    <property type="evidence" value="ECO:0000314"/>
    <property type="project" value="FlyBase"/>
</dbReference>
<dbReference type="GO" id="GO:0005700">
    <property type="term" value="C:polytene chromosome"/>
    <property type="evidence" value="ECO:0000314"/>
    <property type="project" value="FlyBase"/>
</dbReference>
<dbReference type="GO" id="GO:0003680">
    <property type="term" value="F:minor groove of adenine-thymine-rich DNA binding"/>
    <property type="evidence" value="ECO:0000314"/>
    <property type="project" value="FlyBase"/>
</dbReference>
<dbReference type="GO" id="GO:0003696">
    <property type="term" value="F:satellite DNA binding"/>
    <property type="evidence" value="ECO:0000314"/>
    <property type="project" value="FlyBase"/>
</dbReference>
<dbReference type="InterPro" id="IPR017956">
    <property type="entry name" value="AT_hook_DNA-bd_motif"/>
</dbReference>
<dbReference type="Pfam" id="PF02178">
    <property type="entry name" value="AT_hook"/>
    <property type="match status" value="10"/>
</dbReference>
<dbReference type="PRINTS" id="PR00929">
    <property type="entry name" value="ATHOOK"/>
</dbReference>
<dbReference type="SMART" id="SM00384">
    <property type="entry name" value="AT_hook"/>
    <property type="match status" value="10"/>
</dbReference>
<protein>
    <recommendedName>
        <fullName>Chromosomal protein D1</fullName>
    </recommendedName>
</protein>
<organism>
    <name type="scientific">Drosophila melanogaster</name>
    <name type="common">Fruit fly</name>
    <dbReference type="NCBI Taxonomy" id="7227"/>
    <lineage>
        <taxon>Eukaryota</taxon>
        <taxon>Metazoa</taxon>
        <taxon>Ecdysozoa</taxon>
        <taxon>Arthropoda</taxon>
        <taxon>Hexapoda</taxon>
        <taxon>Insecta</taxon>
        <taxon>Pterygota</taxon>
        <taxon>Neoptera</taxon>
        <taxon>Endopterygota</taxon>
        <taxon>Diptera</taxon>
        <taxon>Brachycera</taxon>
        <taxon>Muscomorpha</taxon>
        <taxon>Ephydroidea</taxon>
        <taxon>Drosophilidae</taxon>
        <taxon>Drosophila</taxon>
        <taxon>Sophophora</taxon>
    </lineage>
</organism>
<keyword id="KW-0007">Acetylation</keyword>
<keyword id="KW-0158">Chromosome</keyword>
<keyword id="KW-0903">Direct protein sequencing</keyword>
<keyword id="KW-0238">DNA-binding</keyword>
<keyword id="KW-0539">Nucleus</keyword>
<keyword id="KW-0597">Phosphoprotein</keyword>
<keyword id="KW-1185">Reference proteome</keyword>
<keyword id="KW-0677">Repeat</keyword>
<reference key="1">
    <citation type="journal article" date="1989" name="J. Biol. Chem.">
        <title>Isolation and sequencing of cDNA clones encoding Drosophila chromosomal protein D1. A repeating motif in proteins which recognize at DNA.</title>
        <authorList>
            <person name="Ashley C.T."/>
            <person name="Pendleton C.G."/>
            <person name="Jennings W.W."/>
            <person name="Saxena A."/>
            <person name="Glover C.V.C."/>
        </authorList>
    </citation>
    <scope>NUCLEOTIDE SEQUENCE [MRNA]</scope>
    <scope>ACETYLATION AT MET-1</scope>
    <scope>PROTEIN SEQUENCE OF 1-33</scope>
</reference>
<reference key="2">
    <citation type="submission" date="1996-04" db="EMBL/GenBank/DDBJ databases">
        <title>Structure of the gene encoding Drosophila chromosomal protein D1.</title>
        <authorList>
            <person name="Kleven D.T."/>
            <person name="Murdock D.G."/>
            <person name="Crawford M.J."/>
            <person name="Glover C.V.C."/>
        </authorList>
    </citation>
    <scope>NUCLEOTIDE SEQUENCE [GENOMIC DNA]</scope>
</reference>
<reference key="3">
    <citation type="journal article" date="2000" name="Science">
        <title>The genome sequence of Drosophila melanogaster.</title>
        <authorList>
            <person name="Adams M.D."/>
            <person name="Celniker S.E."/>
            <person name="Holt R.A."/>
            <person name="Evans C.A."/>
            <person name="Gocayne J.D."/>
            <person name="Amanatides P.G."/>
            <person name="Scherer S.E."/>
            <person name="Li P.W."/>
            <person name="Hoskins R.A."/>
            <person name="Galle R.F."/>
            <person name="George R.A."/>
            <person name="Lewis S.E."/>
            <person name="Richards S."/>
            <person name="Ashburner M."/>
            <person name="Henderson S.N."/>
            <person name="Sutton G.G."/>
            <person name="Wortman J.R."/>
            <person name="Yandell M.D."/>
            <person name="Zhang Q."/>
            <person name="Chen L.X."/>
            <person name="Brandon R.C."/>
            <person name="Rogers Y.-H.C."/>
            <person name="Blazej R.G."/>
            <person name="Champe M."/>
            <person name="Pfeiffer B.D."/>
            <person name="Wan K.H."/>
            <person name="Doyle C."/>
            <person name="Baxter E.G."/>
            <person name="Helt G."/>
            <person name="Nelson C.R."/>
            <person name="Miklos G.L.G."/>
            <person name="Abril J.F."/>
            <person name="Agbayani A."/>
            <person name="An H.-J."/>
            <person name="Andrews-Pfannkoch C."/>
            <person name="Baldwin D."/>
            <person name="Ballew R.M."/>
            <person name="Basu A."/>
            <person name="Baxendale J."/>
            <person name="Bayraktaroglu L."/>
            <person name="Beasley E.M."/>
            <person name="Beeson K.Y."/>
            <person name="Benos P.V."/>
            <person name="Berman B.P."/>
            <person name="Bhandari D."/>
            <person name="Bolshakov S."/>
            <person name="Borkova D."/>
            <person name="Botchan M.R."/>
            <person name="Bouck J."/>
            <person name="Brokstein P."/>
            <person name="Brottier P."/>
            <person name="Burtis K.C."/>
            <person name="Busam D.A."/>
            <person name="Butler H."/>
            <person name="Cadieu E."/>
            <person name="Center A."/>
            <person name="Chandra I."/>
            <person name="Cherry J.M."/>
            <person name="Cawley S."/>
            <person name="Dahlke C."/>
            <person name="Davenport L.B."/>
            <person name="Davies P."/>
            <person name="de Pablos B."/>
            <person name="Delcher A."/>
            <person name="Deng Z."/>
            <person name="Mays A.D."/>
            <person name="Dew I."/>
            <person name="Dietz S.M."/>
            <person name="Dodson K."/>
            <person name="Doup L.E."/>
            <person name="Downes M."/>
            <person name="Dugan-Rocha S."/>
            <person name="Dunkov B.C."/>
            <person name="Dunn P."/>
            <person name="Durbin K.J."/>
            <person name="Evangelista C.C."/>
            <person name="Ferraz C."/>
            <person name="Ferriera S."/>
            <person name="Fleischmann W."/>
            <person name="Fosler C."/>
            <person name="Gabrielian A.E."/>
            <person name="Garg N.S."/>
            <person name="Gelbart W.M."/>
            <person name="Glasser K."/>
            <person name="Glodek A."/>
            <person name="Gong F."/>
            <person name="Gorrell J.H."/>
            <person name="Gu Z."/>
            <person name="Guan P."/>
            <person name="Harris M."/>
            <person name="Harris N.L."/>
            <person name="Harvey D.A."/>
            <person name="Heiman T.J."/>
            <person name="Hernandez J.R."/>
            <person name="Houck J."/>
            <person name="Hostin D."/>
            <person name="Houston K.A."/>
            <person name="Howland T.J."/>
            <person name="Wei M.-H."/>
            <person name="Ibegwam C."/>
            <person name="Jalali M."/>
            <person name="Kalush F."/>
            <person name="Karpen G.H."/>
            <person name="Ke Z."/>
            <person name="Kennison J.A."/>
            <person name="Ketchum K.A."/>
            <person name="Kimmel B.E."/>
            <person name="Kodira C.D."/>
            <person name="Kraft C.L."/>
            <person name="Kravitz S."/>
            <person name="Kulp D."/>
            <person name="Lai Z."/>
            <person name="Lasko P."/>
            <person name="Lei Y."/>
            <person name="Levitsky A.A."/>
            <person name="Li J.H."/>
            <person name="Li Z."/>
            <person name="Liang Y."/>
            <person name="Lin X."/>
            <person name="Liu X."/>
            <person name="Mattei B."/>
            <person name="McIntosh T.C."/>
            <person name="McLeod M.P."/>
            <person name="McPherson D."/>
            <person name="Merkulov G."/>
            <person name="Milshina N.V."/>
            <person name="Mobarry C."/>
            <person name="Morris J."/>
            <person name="Moshrefi A."/>
            <person name="Mount S.M."/>
            <person name="Moy M."/>
            <person name="Murphy B."/>
            <person name="Murphy L."/>
            <person name="Muzny D.M."/>
            <person name="Nelson D.L."/>
            <person name="Nelson D.R."/>
            <person name="Nelson K.A."/>
            <person name="Nixon K."/>
            <person name="Nusskern D.R."/>
            <person name="Pacleb J.M."/>
            <person name="Palazzolo M."/>
            <person name="Pittman G.S."/>
            <person name="Pan S."/>
            <person name="Pollard J."/>
            <person name="Puri V."/>
            <person name="Reese M.G."/>
            <person name="Reinert K."/>
            <person name="Remington K."/>
            <person name="Saunders R.D.C."/>
            <person name="Scheeler F."/>
            <person name="Shen H."/>
            <person name="Shue B.C."/>
            <person name="Siden-Kiamos I."/>
            <person name="Simpson M."/>
            <person name="Skupski M.P."/>
            <person name="Smith T.J."/>
            <person name="Spier E."/>
            <person name="Spradling A.C."/>
            <person name="Stapleton M."/>
            <person name="Strong R."/>
            <person name="Sun E."/>
            <person name="Svirskas R."/>
            <person name="Tector C."/>
            <person name="Turner R."/>
            <person name="Venter E."/>
            <person name="Wang A.H."/>
            <person name="Wang X."/>
            <person name="Wang Z.-Y."/>
            <person name="Wassarman D.A."/>
            <person name="Weinstock G.M."/>
            <person name="Weissenbach J."/>
            <person name="Williams S.M."/>
            <person name="Woodage T."/>
            <person name="Worley K.C."/>
            <person name="Wu D."/>
            <person name="Yang S."/>
            <person name="Yao Q.A."/>
            <person name="Ye J."/>
            <person name="Yeh R.-F."/>
            <person name="Zaveri J.S."/>
            <person name="Zhan M."/>
            <person name="Zhang G."/>
            <person name="Zhao Q."/>
            <person name="Zheng L."/>
            <person name="Zheng X.H."/>
            <person name="Zhong F.N."/>
            <person name="Zhong W."/>
            <person name="Zhou X."/>
            <person name="Zhu S.C."/>
            <person name="Zhu X."/>
            <person name="Smith H.O."/>
            <person name="Gibbs R.A."/>
            <person name="Myers E.W."/>
            <person name="Rubin G.M."/>
            <person name="Venter J.C."/>
        </authorList>
    </citation>
    <scope>NUCLEOTIDE SEQUENCE [LARGE SCALE GENOMIC DNA]</scope>
    <source>
        <strain>Berkeley</strain>
    </source>
</reference>
<reference key="4">
    <citation type="journal article" date="2002" name="Genome Biol.">
        <title>Annotation of the Drosophila melanogaster euchromatic genome: a systematic review.</title>
        <authorList>
            <person name="Misra S."/>
            <person name="Crosby M.A."/>
            <person name="Mungall C.J."/>
            <person name="Matthews B.B."/>
            <person name="Campbell K.S."/>
            <person name="Hradecky P."/>
            <person name="Huang Y."/>
            <person name="Kaminker J.S."/>
            <person name="Millburn G.H."/>
            <person name="Prochnik S.E."/>
            <person name="Smith C.D."/>
            <person name="Tupy J.L."/>
            <person name="Whitfield E.J."/>
            <person name="Bayraktaroglu L."/>
            <person name="Berman B.P."/>
            <person name="Bettencourt B.R."/>
            <person name="Celniker S.E."/>
            <person name="de Grey A.D.N.J."/>
            <person name="Drysdale R.A."/>
            <person name="Harris N.L."/>
            <person name="Richter J."/>
            <person name="Russo S."/>
            <person name="Schroeder A.J."/>
            <person name="Shu S.Q."/>
            <person name="Stapleton M."/>
            <person name="Yamada C."/>
            <person name="Ashburner M."/>
            <person name="Gelbart W.M."/>
            <person name="Rubin G.M."/>
            <person name="Lewis S.E."/>
        </authorList>
    </citation>
    <scope>GENOME REANNOTATION</scope>
    <source>
        <strain>Berkeley</strain>
    </source>
</reference>
<reference key="5">
    <citation type="journal article" date="2002" name="Genome Biol.">
        <title>A Drosophila full-length cDNA resource.</title>
        <authorList>
            <person name="Stapleton M."/>
            <person name="Carlson J.W."/>
            <person name="Brokstein P."/>
            <person name="Yu C."/>
            <person name="Champe M."/>
            <person name="George R.A."/>
            <person name="Guarin H."/>
            <person name="Kronmiller B."/>
            <person name="Pacleb J.M."/>
            <person name="Park S."/>
            <person name="Wan K.H."/>
            <person name="Rubin G.M."/>
            <person name="Celniker S.E."/>
        </authorList>
    </citation>
    <scope>NUCLEOTIDE SEQUENCE [LARGE SCALE MRNA]</scope>
    <source>
        <strain>Berkeley</strain>
        <tissue>Embryo</tissue>
        <tissue>Testis</tissue>
    </source>
</reference>
<reference key="6">
    <citation type="journal article" date="2007" name="Mol. Biosyst.">
        <title>An integrated chemical, mass spectrometric and computational strategy for (quantitative) phosphoproteomics: application to Drosophila melanogaster Kc167 cells.</title>
        <authorList>
            <person name="Bodenmiller B."/>
            <person name="Mueller L.N."/>
            <person name="Pedrioli P.G.A."/>
            <person name="Pflieger D."/>
            <person name="Juenger M.A."/>
            <person name="Eng J.K."/>
            <person name="Aebersold R."/>
            <person name="Tao W.A."/>
        </authorList>
    </citation>
    <scope>PHOSPHORYLATION [LARGE SCALE ANALYSIS] AT SER-30 AND SER-246</scope>
    <scope>IDENTIFICATION BY MASS SPECTROMETRY</scope>
</reference>
<reference key="7">
    <citation type="journal article" date="2008" name="J. Proteome Res.">
        <title>Phosphoproteome analysis of Drosophila melanogaster embryos.</title>
        <authorList>
            <person name="Zhai B."/>
            <person name="Villen J."/>
            <person name="Beausoleil S.A."/>
            <person name="Mintseris J."/>
            <person name="Gygi S.P."/>
        </authorList>
    </citation>
    <scope>PHOSPHORYLATION [LARGE SCALE ANALYSIS] AT SER-80; SER-88; SER-89; SER-107; SER-109; SER-112; THR-115; SER-118; SER-133; SER-135; SER-149; SER-150; SER-161; SER-164; SER-170; SER-208; SER-246; SER-252; SER-253; SER-299; SER-307; SER-311; THR-321 AND SER-332</scope>
    <scope>IDENTIFICATION BY MASS SPECTROMETRY</scope>
    <source>
        <tissue>Embryo</tissue>
    </source>
</reference>
<gene>
    <name type="primary">D1</name>
    <name type="ORF">CG9745</name>
</gene>
<accession>P22058</accession>
<accession>Q24215</accession>
<accession>Q8SX69</accession>
<accession>Q9VHH3</accession>
<proteinExistence type="evidence at protein level"/>
<sequence>MEEVAVKKRGRPSKASVGGKSSTAAVAAISPGIKKRGRPAKNKGSSGGGGQRGRPPKASKIQNDEDPEDEGEEDGDGDGSGAELANNSSPSPTKGRGRPKSSGGAGSGSGDSVKTPGSAKKRKAGRPKKHQPSDSENEDDQDEDDDGNSSIEERRPVGRPSAGSVNLNISRTGRGLGRPKKRAVESNGDGEPQVPKKRGRPPQNKSGSGGSTGYVPTGRPRGRPKANAAPVEKHEDNDDDQDDENSGEEEHSSPEKTVVAPKKRGRPSLAAGKVSKEETTKPRSRPAKNIDDDADDADSADQGQHNSKKESNDEDRAVDGTPTKGDGLKWNSDGENDANDGYVSDNYNDSESVAA</sequence>
<name>CPD1_DROME</name>